<proteinExistence type="evidence at transcript level"/>
<sequence length="164" mass="18664">MGDLPGLVRLSIALRIQPNDGPVFYKVDGQRFGQNRTIKLLTGSSYKVEVKIKPTTLQVENISIGGVVVPLELKSKEPDGDRIVYTGTYDTEGVAPTKSGERQPIQITMPFTDIGTFETMWQVKFYNYHKRDHCQWGSPFSVIEYECKPNETRSLMWVNKESFL</sequence>
<evidence type="ECO:0000250" key="1"/>
<evidence type="ECO:0000305" key="2"/>
<gene>
    <name type="primary">CNRIP1</name>
</gene>
<name>CNRP1_BOVIN</name>
<reference key="1">
    <citation type="submission" date="2006-06" db="EMBL/GenBank/DDBJ databases">
        <authorList>
            <consortium name="NIH - Mammalian Gene Collection (MGC) project"/>
        </authorList>
    </citation>
    <scope>NUCLEOTIDE SEQUENCE [LARGE SCALE MRNA]</scope>
    <source>
        <strain>Hereford</strain>
        <tissue>Basal ganglia</tissue>
    </source>
</reference>
<feature type="chain" id="PRO_0000265093" description="CB1 cannabinoid receptor-interacting protein 1">
    <location>
        <begin position="1"/>
        <end position="164"/>
    </location>
</feature>
<dbReference type="EMBL" id="BC118266">
    <property type="protein sequence ID" value="AAI18267.1"/>
    <property type="molecule type" value="mRNA"/>
</dbReference>
<dbReference type="RefSeq" id="NP_001069651.1">
    <property type="nucleotide sequence ID" value="NM_001076183.1"/>
</dbReference>
<dbReference type="SMR" id="Q17QM9"/>
<dbReference type="FunCoup" id="Q17QM9">
    <property type="interactions" value="842"/>
</dbReference>
<dbReference type="STRING" id="9913.ENSBTAP00000001847"/>
<dbReference type="BindingDB" id="Q17QM9"/>
<dbReference type="PaxDb" id="9913-ENSBTAP00000001847"/>
<dbReference type="Ensembl" id="ENSBTAT00000001847.4">
    <property type="protein sequence ID" value="ENSBTAP00000001847.3"/>
    <property type="gene ID" value="ENSBTAG00000001408.5"/>
</dbReference>
<dbReference type="GeneID" id="539715"/>
<dbReference type="KEGG" id="bta:539715"/>
<dbReference type="CTD" id="25927"/>
<dbReference type="VEuPathDB" id="HostDB:ENSBTAG00000001408"/>
<dbReference type="VGNC" id="VGNC:27531">
    <property type="gene designation" value="CNRIP1"/>
</dbReference>
<dbReference type="eggNOG" id="ENOG502QTXE">
    <property type="taxonomic scope" value="Eukaryota"/>
</dbReference>
<dbReference type="GeneTree" id="ENSGT00390000004284"/>
<dbReference type="HOGENOM" id="CLU_110298_0_0_1"/>
<dbReference type="InParanoid" id="Q17QM9"/>
<dbReference type="OMA" id="YCKMETS"/>
<dbReference type="OrthoDB" id="5920443at2759"/>
<dbReference type="TreeFam" id="TF332485"/>
<dbReference type="Proteomes" id="UP000009136">
    <property type="component" value="Chromosome 11"/>
</dbReference>
<dbReference type="Bgee" id="ENSBTAG00000001408">
    <property type="expression patterns" value="Expressed in Ammon's horn and 107 other cell types or tissues"/>
</dbReference>
<dbReference type="GO" id="GO:0005886">
    <property type="term" value="C:plasma membrane"/>
    <property type="evidence" value="ECO:0000318"/>
    <property type="project" value="GO_Central"/>
</dbReference>
<dbReference type="GO" id="GO:0031718">
    <property type="term" value="F:type 1 cannabinoid receptor binding"/>
    <property type="evidence" value="ECO:0000318"/>
    <property type="project" value="GO_Central"/>
</dbReference>
<dbReference type="InterPro" id="IPR029204">
    <property type="entry name" value="CNRIP1"/>
</dbReference>
<dbReference type="PANTHER" id="PTHR31952">
    <property type="entry name" value="CB1 CANNABINOID RECEPTOR-INTERACTING PROTEIN 1"/>
    <property type="match status" value="1"/>
</dbReference>
<dbReference type="PANTHER" id="PTHR31952:SF1">
    <property type="entry name" value="CB1 CANNABINOID RECEPTOR-INTERACTING PROTEIN 1"/>
    <property type="match status" value="1"/>
</dbReference>
<dbReference type="Pfam" id="PF15043">
    <property type="entry name" value="CNRIP1"/>
    <property type="match status" value="1"/>
</dbReference>
<protein>
    <recommendedName>
        <fullName>CB1 cannabinoid receptor-interacting protein 1</fullName>
        <shortName>CRIP-1</shortName>
    </recommendedName>
</protein>
<accession>Q17QM9</accession>
<keyword id="KW-1185">Reference proteome</keyword>
<organism>
    <name type="scientific">Bos taurus</name>
    <name type="common">Bovine</name>
    <dbReference type="NCBI Taxonomy" id="9913"/>
    <lineage>
        <taxon>Eukaryota</taxon>
        <taxon>Metazoa</taxon>
        <taxon>Chordata</taxon>
        <taxon>Craniata</taxon>
        <taxon>Vertebrata</taxon>
        <taxon>Euteleostomi</taxon>
        <taxon>Mammalia</taxon>
        <taxon>Eutheria</taxon>
        <taxon>Laurasiatheria</taxon>
        <taxon>Artiodactyla</taxon>
        <taxon>Ruminantia</taxon>
        <taxon>Pecora</taxon>
        <taxon>Bovidae</taxon>
        <taxon>Bovinae</taxon>
        <taxon>Bos</taxon>
    </lineage>
</organism>
<comment type="function">
    <text evidence="1">Suppresses cannabinoid receptor CNR1-mediated tonic inhibition of voltage-gated calcium channels.</text>
</comment>
<comment type="subunit">
    <text evidence="1">Interacts with the cannabinoid receptor CNR1 (via C-terminus). Does not interact with cannabinoid receptor CNR2 (By similarity).</text>
</comment>
<comment type="similarity">
    <text evidence="2">Belongs to the CNRIP family.</text>
</comment>